<accession>Q2U0M6</accession>
<keyword id="KW-0067">ATP-binding</keyword>
<keyword id="KW-1003">Cell membrane</keyword>
<keyword id="KW-0325">Glycoprotein</keyword>
<keyword id="KW-0472">Membrane</keyword>
<keyword id="KW-0547">Nucleotide-binding</keyword>
<keyword id="KW-1185">Reference proteome</keyword>
<keyword id="KW-0677">Repeat</keyword>
<keyword id="KW-0812">Transmembrane</keyword>
<keyword id="KW-1133">Transmembrane helix</keyword>
<keyword id="KW-0813">Transport</keyword>
<name>ATRG_ASPOR</name>
<feature type="chain" id="PRO_0000449470" description="ABC multidrug transporter atrG">
    <location>
        <begin position="1"/>
        <end position="1494"/>
    </location>
</feature>
<feature type="transmembrane region" description="Helical" evidence="1">
    <location>
        <begin position="527"/>
        <end position="547"/>
    </location>
</feature>
<feature type="transmembrane region" description="Helical" evidence="1">
    <location>
        <begin position="561"/>
        <end position="581"/>
    </location>
</feature>
<feature type="transmembrane region" description="Helical" evidence="1">
    <location>
        <begin position="636"/>
        <end position="656"/>
    </location>
</feature>
<feature type="transmembrane region" description="Helical" evidence="1">
    <location>
        <begin position="669"/>
        <end position="689"/>
    </location>
</feature>
<feature type="transmembrane region" description="Helical" evidence="1">
    <location>
        <begin position="778"/>
        <end position="798"/>
    </location>
</feature>
<feature type="transmembrane region" description="Helical" evidence="1">
    <location>
        <begin position="1191"/>
        <end position="1211"/>
    </location>
</feature>
<feature type="transmembrane region" description="Helical" evidence="1">
    <location>
        <begin position="1227"/>
        <end position="1247"/>
    </location>
</feature>
<feature type="transmembrane region" description="Helical" evidence="1">
    <location>
        <begin position="1276"/>
        <end position="1296"/>
    </location>
</feature>
<feature type="transmembrane region" description="Helical" evidence="1">
    <location>
        <begin position="1312"/>
        <end position="1332"/>
    </location>
</feature>
<feature type="transmembrane region" description="Helical" evidence="1">
    <location>
        <begin position="1351"/>
        <end position="1371"/>
    </location>
</feature>
<feature type="transmembrane region" description="Helical" evidence="1">
    <location>
        <begin position="1463"/>
        <end position="1483"/>
    </location>
</feature>
<feature type="domain" description="ABC transporter 1" evidence="2">
    <location>
        <begin position="162"/>
        <end position="416"/>
    </location>
</feature>
<feature type="domain" description="ABC transporter 2" evidence="2">
    <location>
        <begin position="852"/>
        <end position="1095"/>
    </location>
</feature>
<feature type="region of interest" description="Disordered" evidence="4">
    <location>
        <begin position="1"/>
        <end position="48"/>
    </location>
</feature>
<feature type="region of interest" description="Disordered" evidence="4">
    <location>
        <begin position="84"/>
        <end position="105"/>
    </location>
</feature>
<feature type="compositionally biased region" description="Polar residues" evidence="4">
    <location>
        <begin position="1"/>
        <end position="11"/>
    </location>
</feature>
<feature type="binding site" evidence="2">
    <location>
        <begin position="888"/>
        <end position="895"/>
    </location>
    <ligand>
        <name>ATP</name>
        <dbReference type="ChEBI" id="CHEBI:30616"/>
    </ligand>
</feature>
<feature type="glycosylation site" description="N-linked (GlcNAc...) asparagine" evidence="3">
    <location>
        <position position="41"/>
    </location>
</feature>
<feature type="glycosylation site" description="N-linked (GlcNAc...) asparagine" evidence="3">
    <location>
        <position position="141"/>
    </location>
</feature>
<feature type="glycosylation site" description="N-linked (GlcNAc...) asparagine" evidence="3">
    <location>
        <position position="340"/>
    </location>
</feature>
<feature type="glycosylation site" description="N-linked (GlcNAc...) asparagine" evidence="3">
    <location>
        <position position="622"/>
    </location>
</feature>
<feature type="glycosylation site" description="N-linked (GlcNAc...) asparagine" evidence="3">
    <location>
        <position position="835"/>
    </location>
</feature>
<feature type="glycosylation site" description="N-linked (GlcNAc...) asparagine" evidence="3">
    <location>
        <position position="1410"/>
    </location>
</feature>
<feature type="glycosylation site" description="N-linked (GlcNAc...) asparagine" evidence="3">
    <location>
        <position position="1432"/>
    </location>
</feature>
<evidence type="ECO:0000255" key="1"/>
<evidence type="ECO:0000255" key="2">
    <source>
        <dbReference type="PROSITE-ProRule" id="PRU00434"/>
    </source>
</evidence>
<evidence type="ECO:0000255" key="3">
    <source>
        <dbReference type="PROSITE-ProRule" id="PRU00498"/>
    </source>
</evidence>
<evidence type="ECO:0000256" key="4">
    <source>
        <dbReference type="SAM" id="MobiDB-lite"/>
    </source>
</evidence>
<evidence type="ECO:0000269" key="5">
    <source>
    </source>
</evidence>
<evidence type="ECO:0000303" key="6">
    <source>
    </source>
</evidence>
<evidence type="ECO:0000305" key="7"/>
<evidence type="ECO:0000305" key="8">
    <source>
    </source>
</evidence>
<reference key="1">
    <citation type="journal article" date="2005" name="Nature">
        <title>Genome sequencing and analysis of Aspergillus oryzae.</title>
        <authorList>
            <person name="Machida M."/>
            <person name="Asai K."/>
            <person name="Sano M."/>
            <person name="Tanaka T."/>
            <person name="Kumagai T."/>
            <person name="Terai G."/>
            <person name="Kusumoto K."/>
            <person name="Arima T."/>
            <person name="Akita O."/>
            <person name="Kashiwagi Y."/>
            <person name="Abe K."/>
            <person name="Gomi K."/>
            <person name="Horiuchi H."/>
            <person name="Kitamoto K."/>
            <person name="Kobayashi T."/>
            <person name="Takeuchi M."/>
            <person name="Denning D.W."/>
            <person name="Galagan J.E."/>
            <person name="Nierman W.C."/>
            <person name="Yu J."/>
            <person name="Archer D.B."/>
            <person name="Bennett J.W."/>
            <person name="Bhatnagar D."/>
            <person name="Cleveland T.E."/>
            <person name="Fedorova N.D."/>
            <person name="Gotoh O."/>
            <person name="Horikawa H."/>
            <person name="Hosoyama A."/>
            <person name="Ichinomiya M."/>
            <person name="Igarashi R."/>
            <person name="Iwashita K."/>
            <person name="Juvvadi P.R."/>
            <person name="Kato M."/>
            <person name="Kato Y."/>
            <person name="Kin T."/>
            <person name="Kokubun A."/>
            <person name="Maeda H."/>
            <person name="Maeyama N."/>
            <person name="Maruyama J."/>
            <person name="Nagasaki H."/>
            <person name="Nakajima T."/>
            <person name="Oda K."/>
            <person name="Okada K."/>
            <person name="Paulsen I."/>
            <person name="Sakamoto K."/>
            <person name="Sawano T."/>
            <person name="Takahashi M."/>
            <person name="Takase K."/>
            <person name="Terabayashi Y."/>
            <person name="Wortman J.R."/>
            <person name="Yamada O."/>
            <person name="Yamagata Y."/>
            <person name="Anazawa H."/>
            <person name="Hata Y."/>
            <person name="Koide Y."/>
            <person name="Komori T."/>
            <person name="Koyama Y."/>
            <person name="Minetoki T."/>
            <person name="Suharnan S."/>
            <person name="Tanaka A."/>
            <person name="Isono K."/>
            <person name="Kuhara S."/>
            <person name="Ogasawara N."/>
            <person name="Kikuchi H."/>
        </authorList>
    </citation>
    <scope>NUCLEOTIDE SEQUENCE [LARGE SCALE GENOMIC DNA]</scope>
    <source>
        <strain>ATCC 42149 / RIB 40</strain>
    </source>
</reference>
<reference key="2">
    <citation type="journal article" date="2018" name="Biosci. Biotechnol. Biochem.">
        <title>The PDR-type ABC transporters AtrA and AtrG are involved in azole drug resistance in Aspergillus oryzae.</title>
        <authorList>
            <person name="Miura D."/>
            <person name="Sugiyama K."/>
            <person name="Ito A."/>
            <person name="Ohba-Tanaka A."/>
            <person name="Tanaka M."/>
            <person name="Shintani T."/>
            <person name="Gomi K."/>
        </authorList>
    </citation>
    <scope>FUNCTION</scope>
    <scope>INDUCTION</scope>
    <scope>DISRUPTION PHENOTYPE</scope>
    <scope>CATALYTIC ACTIVITY</scope>
</reference>
<dbReference type="EMBL" id="BA000055">
    <property type="protein sequence ID" value="BAE64889.1"/>
    <property type="molecule type" value="Genomic_DNA"/>
</dbReference>
<dbReference type="RefSeq" id="XP_001826022.1">
    <property type="nucleotide sequence ID" value="XM_001825970.2"/>
</dbReference>
<dbReference type="SMR" id="Q2U0M6"/>
<dbReference type="STRING" id="510516.Q2U0M6"/>
<dbReference type="GlyCosmos" id="Q2U0M6">
    <property type="glycosylation" value="7 sites, No reported glycans"/>
</dbReference>
<dbReference type="EnsemblFungi" id="BAE64889">
    <property type="protein sequence ID" value="BAE64889"/>
    <property type="gene ID" value="AO090011000378"/>
</dbReference>
<dbReference type="GeneID" id="5998125"/>
<dbReference type="KEGG" id="aor:AO090011000378"/>
<dbReference type="VEuPathDB" id="FungiDB:AO090011000378"/>
<dbReference type="HOGENOM" id="CLU_000604_35_0_1"/>
<dbReference type="OMA" id="EMNGIYM"/>
<dbReference type="OrthoDB" id="42431at5052"/>
<dbReference type="Proteomes" id="UP000006564">
    <property type="component" value="Chromosome 7"/>
</dbReference>
<dbReference type="GO" id="GO:0005886">
    <property type="term" value="C:plasma membrane"/>
    <property type="evidence" value="ECO:0007669"/>
    <property type="project" value="UniProtKB-SubCell"/>
</dbReference>
<dbReference type="GO" id="GO:0140359">
    <property type="term" value="F:ABC-type transporter activity"/>
    <property type="evidence" value="ECO:0007669"/>
    <property type="project" value="InterPro"/>
</dbReference>
<dbReference type="GO" id="GO:0005524">
    <property type="term" value="F:ATP binding"/>
    <property type="evidence" value="ECO:0007669"/>
    <property type="project" value="UniProtKB-KW"/>
</dbReference>
<dbReference type="GO" id="GO:0016887">
    <property type="term" value="F:ATP hydrolysis activity"/>
    <property type="evidence" value="ECO:0007669"/>
    <property type="project" value="InterPro"/>
</dbReference>
<dbReference type="CDD" id="cd03233">
    <property type="entry name" value="ABCG_PDR_domain1"/>
    <property type="match status" value="1"/>
</dbReference>
<dbReference type="CDD" id="cd03232">
    <property type="entry name" value="ABCG_PDR_domain2"/>
    <property type="match status" value="1"/>
</dbReference>
<dbReference type="FunFam" id="3.40.50.300:FF:000881">
    <property type="entry name" value="ABC multidrug transporter A-1"/>
    <property type="match status" value="1"/>
</dbReference>
<dbReference type="FunFam" id="3.40.50.300:FF:000054">
    <property type="entry name" value="ABC multidrug transporter atrF"/>
    <property type="match status" value="1"/>
</dbReference>
<dbReference type="Gene3D" id="3.40.50.300">
    <property type="entry name" value="P-loop containing nucleotide triphosphate hydrolases"/>
    <property type="match status" value="2"/>
</dbReference>
<dbReference type="InterPro" id="IPR003593">
    <property type="entry name" value="AAA+_ATPase"/>
</dbReference>
<dbReference type="InterPro" id="IPR013525">
    <property type="entry name" value="ABC2_TM"/>
</dbReference>
<dbReference type="InterPro" id="IPR029481">
    <property type="entry name" value="ABC_trans_N"/>
</dbReference>
<dbReference type="InterPro" id="IPR003439">
    <property type="entry name" value="ABC_transporter-like_ATP-bd"/>
</dbReference>
<dbReference type="InterPro" id="IPR017871">
    <property type="entry name" value="ABC_transporter-like_CS"/>
</dbReference>
<dbReference type="InterPro" id="IPR043926">
    <property type="entry name" value="ABCG_dom"/>
</dbReference>
<dbReference type="InterPro" id="IPR034001">
    <property type="entry name" value="ABCG_PDR_1"/>
</dbReference>
<dbReference type="InterPro" id="IPR034003">
    <property type="entry name" value="ABCG_PDR_2"/>
</dbReference>
<dbReference type="InterPro" id="IPR027417">
    <property type="entry name" value="P-loop_NTPase"/>
</dbReference>
<dbReference type="InterPro" id="IPR010929">
    <property type="entry name" value="PDR_CDR_ABC"/>
</dbReference>
<dbReference type="PANTHER" id="PTHR19241">
    <property type="entry name" value="ATP-BINDING CASSETTE TRANSPORTER"/>
    <property type="match status" value="1"/>
</dbReference>
<dbReference type="Pfam" id="PF01061">
    <property type="entry name" value="ABC2_membrane"/>
    <property type="match status" value="2"/>
</dbReference>
<dbReference type="Pfam" id="PF19055">
    <property type="entry name" value="ABC2_membrane_7"/>
    <property type="match status" value="1"/>
</dbReference>
<dbReference type="Pfam" id="PF00005">
    <property type="entry name" value="ABC_tran"/>
    <property type="match status" value="2"/>
</dbReference>
<dbReference type="Pfam" id="PF14510">
    <property type="entry name" value="ABC_trans_N"/>
    <property type="match status" value="1"/>
</dbReference>
<dbReference type="Pfam" id="PF06422">
    <property type="entry name" value="PDR_CDR"/>
    <property type="match status" value="2"/>
</dbReference>
<dbReference type="SMART" id="SM00382">
    <property type="entry name" value="AAA"/>
    <property type="match status" value="2"/>
</dbReference>
<dbReference type="SUPFAM" id="SSF52540">
    <property type="entry name" value="P-loop containing nucleoside triphosphate hydrolases"/>
    <property type="match status" value="2"/>
</dbReference>
<dbReference type="PROSITE" id="PS00211">
    <property type="entry name" value="ABC_TRANSPORTER_1"/>
    <property type="match status" value="1"/>
</dbReference>
<dbReference type="PROSITE" id="PS50893">
    <property type="entry name" value="ABC_TRANSPORTER_2"/>
    <property type="match status" value="2"/>
</dbReference>
<protein>
    <recommendedName>
        <fullName>ABC multidrug transporter atrG</fullName>
    </recommendedName>
</protein>
<organism>
    <name type="scientific">Aspergillus oryzae (strain ATCC 42149 / RIB 40)</name>
    <name type="common">Yellow koji mold</name>
    <dbReference type="NCBI Taxonomy" id="510516"/>
    <lineage>
        <taxon>Eukaryota</taxon>
        <taxon>Fungi</taxon>
        <taxon>Dikarya</taxon>
        <taxon>Ascomycota</taxon>
        <taxon>Pezizomycotina</taxon>
        <taxon>Eurotiomycetes</taxon>
        <taxon>Eurotiomycetidae</taxon>
        <taxon>Eurotiales</taxon>
        <taxon>Aspergillaceae</taxon>
        <taxon>Aspergillus</taxon>
        <taxon>Aspergillus subgen. Circumdati</taxon>
    </lineage>
</organism>
<sequence>MSLLGTINPNLNPARAVGAQGDAEGAAPVSGGEPMPIFEGNDSARTSDTALDKLGKDESKYDEQIAEAEVTRLAQQLTRQSTRFSVSQNAENPFLETKEDSTLNPLGPNFKAKNWMKNLLALTSRDPERHPRREAGVSFRNLSVHGYGSPTDYQKDVFNMVLQVGALFRAVTGTGKQKIQILRDFDGLVKSGEMLVVLGRPGSGCSTFLKTLAGEMNGIYMDDKSDLNYQGIPAKQMRRQFRGEAIYNAETDVHFPQLSVGDTLKFAALTRCPRNRFPGVSREQYATHMRDVVMAMLGLTHTINTRVGNDFVRGVSGGERKRVSIAEATLSGSPLQCWDNSTRGLDSANALEFCKTLNLMTKYAGATVAVAIYQASQSAYDVFDKVTVLYEGRQIYFGRTDEAKEFFTTMGFECPERQTTADFLTSLTSPSERIVKKGYEGKVPRTPDEFAAAWKNSEAYAKLIREIEEYNREFPLGGESVQKFVESRRAMQAKNQRVGSPYTVSIYEQVRLCMIRGFQRLKGDSSLTMSQLIGNFIMALIIGSVFYNLQHDTSSFYSRGALLFFAVLLNAFSSALEILTLYAQRPIVEKQARYAMYHPFAEAIASMLCDMPYKITNAIIFNITLYFMTNLRREPGPFFVFLLFTFVTTMTMSMLFRTIAASSRTLSQALVPAAILILGLVIYTGFTIPTRNMLGWSRWMNYLDPIAYGFESLMVNEFHNTKWKCSSAELIPNYEGASLANKICSTVGAVAGSEYVYGDDYLEQSFQYYESHKWRNLGIMFAFMVFFLATYLTATEYISEAKSKGEVLLFRRGHYSRGAADVETHNEVSATEKTNESSDGAGAAIQRQEAIFHWQDVCYDIKIKGEPRRILDHVDGWVKPGTCTALMGVSGAGKTTLLDVLATRVTMGVVTGEMLVDGRLRDQSFQRKTGYVQQQDLHLHTTTVREALRFSAILRQPAHVSRQEKLDYVEEVIKLLGMEAYADAVVGVPGEGLNVEQRKRLTIGVELAAKPQLLLFLDEPTSGLDSQTSWSILDLIDTLTKHGQAILCTIHQPSAMLFQRFDRLLFLAKGGKTVYFGEIGERSSTLASYFERNGAPKLPVEANPAEWMLEVIGAAPGSHSDIDWPAVWRESPEREAVRNHLAELKSTLSQKSVDSSHSDESSFKEFAAPFSVQLYECLVRVFSQYWRTPVYIYSKAVLCILTSLYIGFSFFHAENSRQGLQNQMFSIFMLMTIFGNLVQQIMPNFVTQRALYEARERPSKAYSWKAFMTANILVELPWNALMSVIIFVCWYYPIGLYRNAEPTDSVHERGALMWLLILSFLLFTSTFAHMMIAGIELAETGGNLANLLFSLCLIFCGVLATPETLPGFWIFMYRVSPFTYLVSGMLATGVGRTTAVCEKVEFLHLTPPANTTCYDYMSDYIGSFGGYLENDNATDSCSFCQISSTDTFLSAVSSYYEDRWRNFGIMWAFIVFNIAAAVFIYWLARVPKGSRSKN</sequence>
<comment type="function">
    <text evidence="5">Pleiotropic ABC efflux transporter involved in the basal level of azole susceptibility (PubMed:30011258). Confers resistance to miconazole and clotrimazole (PubMed:30011258).</text>
</comment>
<comment type="catalytic activity">
    <reaction evidence="8">
        <text>(R)-miconazole(in) + ATP + H2O = (R)-miconazole(out) + ADP + phosphate + H(+)</text>
        <dbReference type="Rhea" id="RHEA:61928"/>
        <dbReference type="ChEBI" id="CHEBI:15377"/>
        <dbReference type="ChEBI" id="CHEBI:15378"/>
        <dbReference type="ChEBI" id="CHEBI:30616"/>
        <dbReference type="ChEBI" id="CHEBI:43474"/>
        <dbReference type="ChEBI" id="CHEBI:82894"/>
        <dbReference type="ChEBI" id="CHEBI:456216"/>
    </reaction>
    <physiologicalReaction direction="left-to-right" evidence="8">
        <dbReference type="Rhea" id="RHEA:61929"/>
    </physiologicalReaction>
</comment>
<comment type="subcellular location">
    <subcellularLocation>
        <location evidence="8">Cell membrane</location>
        <topology evidence="1">Multi-pass membrane protein</topology>
    </subcellularLocation>
</comment>
<comment type="induction">
    <text evidence="5">Expression is highly up-regulated in azole resistant strains and in the presence of miconazole.</text>
</comment>
<comment type="disruption phenotype">
    <text evidence="5">Leads to strong miconazole susceptibility.</text>
</comment>
<comment type="similarity">
    <text evidence="7">Belongs to the ABC transporter superfamily. ABCG family. PDR (TC 3.A.1.205) subfamily.</text>
</comment>
<gene>
    <name evidence="6" type="primary">atrG</name>
    <name type="ORF">AO090011000378</name>
</gene>
<proteinExistence type="evidence at protein level"/>